<name>DSBB_YERPS</name>
<protein>
    <recommendedName>
        <fullName evidence="1">Disulfide bond formation protein B</fullName>
    </recommendedName>
    <alternativeName>
        <fullName evidence="1">Disulfide oxidoreductase</fullName>
    </alternativeName>
</protein>
<accession>Q66AR0</accession>
<reference key="1">
    <citation type="journal article" date="2004" name="Proc. Natl. Acad. Sci. U.S.A.">
        <title>Insights into the evolution of Yersinia pestis through whole-genome comparison with Yersinia pseudotuberculosis.</title>
        <authorList>
            <person name="Chain P.S.G."/>
            <person name="Carniel E."/>
            <person name="Larimer F.W."/>
            <person name="Lamerdin J."/>
            <person name="Stoutland P.O."/>
            <person name="Regala W.M."/>
            <person name="Georgescu A.M."/>
            <person name="Vergez L.M."/>
            <person name="Land M.L."/>
            <person name="Motin V.L."/>
            <person name="Brubaker R.R."/>
            <person name="Fowler J."/>
            <person name="Hinnebusch J."/>
            <person name="Marceau M."/>
            <person name="Medigue C."/>
            <person name="Simonet M."/>
            <person name="Chenal-Francisque V."/>
            <person name="Souza B."/>
            <person name="Dacheux D."/>
            <person name="Elliott J.M."/>
            <person name="Derbise A."/>
            <person name="Hauser L.J."/>
            <person name="Garcia E."/>
        </authorList>
    </citation>
    <scope>NUCLEOTIDE SEQUENCE [LARGE SCALE GENOMIC DNA]</scope>
    <source>
        <strain>IP32953</strain>
    </source>
</reference>
<proteinExistence type="inferred from homology"/>
<organism>
    <name type="scientific">Yersinia pseudotuberculosis serotype I (strain IP32953)</name>
    <dbReference type="NCBI Taxonomy" id="273123"/>
    <lineage>
        <taxon>Bacteria</taxon>
        <taxon>Pseudomonadati</taxon>
        <taxon>Pseudomonadota</taxon>
        <taxon>Gammaproteobacteria</taxon>
        <taxon>Enterobacterales</taxon>
        <taxon>Yersiniaceae</taxon>
        <taxon>Yersinia</taxon>
    </lineage>
</organism>
<dbReference type="EMBL" id="BX936398">
    <property type="protein sequence ID" value="CAH21308.1"/>
    <property type="molecule type" value="Genomic_DNA"/>
</dbReference>
<dbReference type="RefSeq" id="WP_002227934.1">
    <property type="nucleotide sequence ID" value="NZ_CP009712.1"/>
</dbReference>
<dbReference type="SMR" id="Q66AR0"/>
<dbReference type="GeneID" id="57976524"/>
<dbReference type="KEGG" id="ypo:BZ17_394"/>
<dbReference type="KEGG" id="yps:YPTB2070"/>
<dbReference type="PATRIC" id="fig|273123.14.peg.421"/>
<dbReference type="Proteomes" id="UP000001011">
    <property type="component" value="Chromosome"/>
</dbReference>
<dbReference type="GO" id="GO:0005886">
    <property type="term" value="C:plasma membrane"/>
    <property type="evidence" value="ECO:0007669"/>
    <property type="project" value="UniProtKB-SubCell"/>
</dbReference>
<dbReference type="GO" id="GO:0009055">
    <property type="term" value="F:electron transfer activity"/>
    <property type="evidence" value="ECO:0007669"/>
    <property type="project" value="UniProtKB-UniRule"/>
</dbReference>
<dbReference type="GO" id="GO:0015035">
    <property type="term" value="F:protein-disulfide reductase activity"/>
    <property type="evidence" value="ECO:0007669"/>
    <property type="project" value="UniProtKB-UniRule"/>
</dbReference>
<dbReference type="GO" id="GO:0006457">
    <property type="term" value="P:protein folding"/>
    <property type="evidence" value="ECO:0007669"/>
    <property type="project" value="InterPro"/>
</dbReference>
<dbReference type="FunFam" id="1.20.1550.10:FF:000001">
    <property type="entry name" value="Disulfide bond formation protein B"/>
    <property type="match status" value="1"/>
</dbReference>
<dbReference type="Gene3D" id="1.20.1550.10">
    <property type="entry name" value="DsbB-like"/>
    <property type="match status" value="1"/>
</dbReference>
<dbReference type="HAMAP" id="MF_00286">
    <property type="entry name" value="DsbB"/>
    <property type="match status" value="1"/>
</dbReference>
<dbReference type="InterPro" id="IPR003752">
    <property type="entry name" value="DiS_bond_form_DsbB/BdbC"/>
</dbReference>
<dbReference type="InterPro" id="IPR022920">
    <property type="entry name" value="Disulphide_bond_form_DsbB"/>
</dbReference>
<dbReference type="InterPro" id="IPR050183">
    <property type="entry name" value="DsbB"/>
</dbReference>
<dbReference type="InterPro" id="IPR023380">
    <property type="entry name" value="DsbB-like_sf"/>
</dbReference>
<dbReference type="NCBIfam" id="NF002485">
    <property type="entry name" value="PRK01749.1"/>
    <property type="match status" value="1"/>
</dbReference>
<dbReference type="PANTHER" id="PTHR36570">
    <property type="entry name" value="DISULFIDE BOND FORMATION PROTEIN B"/>
    <property type="match status" value="1"/>
</dbReference>
<dbReference type="PANTHER" id="PTHR36570:SF2">
    <property type="entry name" value="DISULFIDE BOND FORMATION PROTEIN B"/>
    <property type="match status" value="1"/>
</dbReference>
<dbReference type="Pfam" id="PF02600">
    <property type="entry name" value="DsbB"/>
    <property type="match status" value="1"/>
</dbReference>
<dbReference type="SUPFAM" id="SSF158442">
    <property type="entry name" value="DsbB-like"/>
    <property type="match status" value="1"/>
</dbReference>
<evidence type="ECO:0000255" key="1">
    <source>
        <dbReference type="HAMAP-Rule" id="MF_00286"/>
    </source>
</evidence>
<sequence length="176" mass="20107">MLQFLNRCSRGRGAWLLMALTAFLLELTALYFQHIMLLQPCVMCIYERVALFGILGASLLGAIAPRSPLRYLAIAVWIYSAWKGVQLAWAHTMLQLNPSPFNTCDFFVNFPSWLPLDKWLPAVFAASGDCSERQWQFMSLEMPQWLVGIFAAYLVIAVLVLISQFVKPKRRDLFGR</sequence>
<gene>
    <name evidence="1" type="primary">dsbB</name>
    <name type="ordered locus">YPTB2070</name>
</gene>
<keyword id="KW-0997">Cell inner membrane</keyword>
<keyword id="KW-1003">Cell membrane</keyword>
<keyword id="KW-0143">Chaperone</keyword>
<keyword id="KW-1015">Disulfide bond</keyword>
<keyword id="KW-0249">Electron transport</keyword>
<keyword id="KW-0472">Membrane</keyword>
<keyword id="KW-0560">Oxidoreductase</keyword>
<keyword id="KW-0676">Redox-active center</keyword>
<keyword id="KW-0812">Transmembrane</keyword>
<keyword id="KW-1133">Transmembrane helix</keyword>
<keyword id="KW-0813">Transport</keyword>
<feature type="chain" id="PRO_0000298429" description="Disulfide bond formation protein B">
    <location>
        <begin position="1"/>
        <end position="176"/>
    </location>
</feature>
<feature type="topological domain" description="Cytoplasmic" evidence="1">
    <location>
        <begin position="1"/>
        <end position="14"/>
    </location>
</feature>
<feature type="transmembrane region" description="Helical" evidence="1">
    <location>
        <begin position="15"/>
        <end position="31"/>
    </location>
</feature>
<feature type="topological domain" description="Periplasmic" evidence="1">
    <location>
        <begin position="32"/>
        <end position="49"/>
    </location>
</feature>
<feature type="transmembrane region" description="Helical" evidence="1">
    <location>
        <begin position="50"/>
        <end position="65"/>
    </location>
</feature>
<feature type="topological domain" description="Cytoplasmic" evidence="1">
    <location>
        <begin position="66"/>
        <end position="71"/>
    </location>
</feature>
<feature type="transmembrane region" description="Helical" evidence="1">
    <location>
        <begin position="72"/>
        <end position="89"/>
    </location>
</feature>
<feature type="topological domain" description="Periplasmic" evidence="1">
    <location>
        <begin position="90"/>
        <end position="144"/>
    </location>
</feature>
<feature type="transmembrane region" description="Helical" evidence="1">
    <location>
        <begin position="145"/>
        <end position="163"/>
    </location>
</feature>
<feature type="topological domain" description="Cytoplasmic" evidence="1">
    <location>
        <begin position="164"/>
        <end position="176"/>
    </location>
</feature>
<feature type="disulfide bond" description="Redox-active" evidence="1">
    <location>
        <begin position="41"/>
        <end position="44"/>
    </location>
</feature>
<feature type="disulfide bond" description="Redox-active" evidence="1">
    <location>
        <begin position="104"/>
        <end position="130"/>
    </location>
</feature>
<comment type="function">
    <text evidence="1">Required for disulfide bond formation in some periplasmic proteins. Acts by oxidizing the DsbA protein.</text>
</comment>
<comment type="subcellular location">
    <subcellularLocation>
        <location evidence="1">Cell inner membrane</location>
        <topology evidence="1">Multi-pass membrane protein</topology>
    </subcellularLocation>
</comment>
<comment type="similarity">
    <text evidence="1">Belongs to the DsbB family.</text>
</comment>